<keyword id="KW-0963">Cytoplasm</keyword>
<keyword id="KW-0489">Methyltransferase</keyword>
<keyword id="KW-0949">S-adenosyl-L-methionine</keyword>
<keyword id="KW-0808">Transferase</keyword>
<keyword id="KW-0819">tRNA processing</keyword>
<comment type="function">
    <text evidence="1">Specifically methylates guanosine-37 in various tRNAs.</text>
</comment>
<comment type="catalytic activity">
    <reaction evidence="1">
        <text>guanosine(37) in tRNA + S-adenosyl-L-methionine = N(1)-methylguanosine(37) in tRNA + S-adenosyl-L-homocysteine + H(+)</text>
        <dbReference type="Rhea" id="RHEA:36899"/>
        <dbReference type="Rhea" id="RHEA-COMP:10145"/>
        <dbReference type="Rhea" id="RHEA-COMP:10147"/>
        <dbReference type="ChEBI" id="CHEBI:15378"/>
        <dbReference type="ChEBI" id="CHEBI:57856"/>
        <dbReference type="ChEBI" id="CHEBI:59789"/>
        <dbReference type="ChEBI" id="CHEBI:73542"/>
        <dbReference type="ChEBI" id="CHEBI:74269"/>
        <dbReference type="EC" id="2.1.1.228"/>
    </reaction>
</comment>
<comment type="subunit">
    <text evidence="1">Homodimer.</text>
</comment>
<comment type="subcellular location">
    <subcellularLocation>
        <location evidence="1">Cytoplasm</location>
    </subcellularLocation>
</comment>
<comment type="similarity">
    <text evidence="1">Belongs to the RNA methyltransferase TrmD family.</text>
</comment>
<proteinExistence type="inferred from homology"/>
<protein>
    <recommendedName>
        <fullName evidence="1">tRNA (guanine-N(1)-)-methyltransferase</fullName>
        <ecNumber evidence="1">2.1.1.228</ecNumber>
    </recommendedName>
    <alternativeName>
        <fullName evidence="1">M1G-methyltransferase</fullName>
    </alternativeName>
    <alternativeName>
        <fullName evidence="1">tRNA [GM37] methyltransferase</fullName>
    </alternativeName>
</protein>
<accession>C0RFF8</accession>
<name>TRMD_BRUMB</name>
<evidence type="ECO:0000255" key="1">
    <source>
        <dbReference type="HAMAP-Rule" id="MF_00605"/>
    </source>
</evidence>
<organism>
    <name type="scientific">Brucella melitensis biotype 2 (strain ATCC 23457)</name>
    <dbReference type="NCBI Taxonomy" id="546272"/>
    <lineage>
        <taxon>Bacteria</taxon>
        <taxon>Pseudomonadati</taxon>
        <taxon>Pseudomonadota</taxon>
        <taxon>Alphaproteobacteria</taxon>
        <taxon>Hyphomicrobiales</taxon>
        <taxon>Brucellaceae</taxon>
        <taxon>Brucella/Ochrobactrum group</taxon>
        <taxon>Brucella</taxon>
    </lineage>
</organism>
<feature type="chain" id="PRO_1000147077" description="tRNA (guanine-N(1)-)-methyltransferase">
    <location>
        <begin position="1"/>
        <end position="244"/>
    </location>
</feature>
<feature type="binding site" evidence="1">
    <location>
        <position position="120"/>
    </location>
    <ligand>
        <name>S-adenosyl-L-methionine</name>
        <dbReference type="ChEBI" id="CHEBI:59789"/>
    </ligand>
</feature>
<feature type="binding site" evidence="1">
    <location>
        <begin position="140"/>
        <end position="145"/>
    </location>
    <ligand>
        <name>S-adenosyl-L-methionine</name>
        <dbReference type="ChEBI" id="CHEBI:59789"/>
    </ligand>
</feature>
<reference key="1">
    <citation type="submission" date="2009-03" db="EMBL/GenBank/DDBJ databases">
        <title>Brucella melitensis ATCC 23457 whole genome shotgun sequencing project.</title>
        <authorList>
            <person name="Setubal J.C."/>
            <person name="Boyle S."/>
            <person name="Crasta O.R."/>
            <person name="Gillespie J.J."/>
            <person name="Kenyon R.W."/>
            <person name="Lu J."/>
            <person name="Mane S."/>
            <person name="Nagrani S."/>
            <person name="Shallom J.M."/>
            <person name="Shallom S."/>
            <person name="Shukla M."/>
            <person name="Snyder E.E."/>
            <person name="Sobral B.W."/>
            <person name="Wattam A.R."/>
            <person name="Will R."/>
            <person name="Williams K."/>
            <person name="Yoo H."/>
            <person name="Munk C."/>
            <person name="Tapia R."/>
            <person name="Han C."/>
            <person name="Detter J.C."/>
            <person name="Bruce D."/>
            <person name="Brettin T.S."/>
        </authorList>
    </citation>
    <scope>NUCLEOTIDE SEQUENCE [LARGE SCALE GENOMIC DNA]</scope>
    <source>
        <strain>ATCC 23457</strain>
    </source>
</reference>
<sequence length="244" mass="26827">MTDLPEKEGGRFHASVLTLYPEMFPGPLGISLAGKALAEGKWQLDTVQIRDFAEGRHRMVDDTPSGGGAGMVMKADVVARALDSVDDGRPMLLMTPRGKPLTQERVRALADGAGAIILCGRFEGVDERVIEGRNLEEISIGDYILSGGETAAIVLLDAVVRLLPGVMGNRESGETESFETGLLEHPHYTRPQEWEGRAIPDILTSGNHGAIDKWRLEQAERITRERRPDLWEAYCKNRRKIGGQ</sequence>
<dbReference type="EC" id="2.1.1.228" evidence="1"/>
<dbReference type="EMBL" id="CP001488">
    <property type="protein sequence ID" value="ACO01630.1"/>
    <property type="molecule type" value="Genomic_DNA"/>
</dbReference>
<dbReference type="RefSeq" id="WP_002964982.1">
    <property type="nucleotide sequence ID" value="NC_012441.1"/>
</dbReference>
<dbReference type="SMR" id="C0RFF8"/>
<dbReference type="GeneID" id="97534799"/>
<dbReference type="KEGG" id="bmi:BMEA_A1970"/>
<dbReference type="HOGENOM" id="CLU_047363_0_1_5"/>
<dbReference type="Proteomes" id="UP000001748">
    <property type="component" value="Chromosome I"/>
</dbReference>
<dbReference type="GO" id="GO:0005829">
    <property type="term" value="C:cytosol"/>
    <property type="evidence" value="ECO:0007669"/>
    <property type="project" value="TreeGrafter"/>
</dbReference>
<dbReference type="GO" id="GO:0052906">
    <property type="term" value="F:tRNA (guanine(37)-N1)-methyltransferase activity"/>
    <property type="evidence" value="ECO:0007669"/>
    <property type="project" value="UniProtKB-UniRule"/>
</dbReference>
<dbReference type="GO" id="GO:0002939">
    <property type="term" value="P:tRNA N1-guanine methylation"/>
    <property type="evidence" value="ECO:0007669"/>
    <property type="project" value="TreeGrafter"/>
</dbReference>
<dbReference type="CDD" id="cd18080">
    <property type="entry name" value="TrmD-like"/>
    <property type="match status" value="1"/>
</dbReference>
<dbReference type="Gene3D" id="3.40.1280.10">
    <property type="match status" value="1"/>
</dbReference>
<dbReference type="Gene3D" id="1.10.1270.20">
    <property type="entry name" value="tRNA(m1g37)methyltransferase, domain 2"/>
    <property type="match status" value="1"/>
</dbReference>
<dbReference type="HAMAP" id="MF_00605">
    <property type="entry name" value="TrmD"/>
    <property type="match status" value="1"/>
</dbReference>
<dbReference type="InterPro" id="IPR029028">
    <property type="entry name" value="Alpha/beta_knot_MTases"/>
</dbReference>
<dbReference type="InterPro" id="IPR023148">
    <property type="entry name" value="tRNA_m1G_MeTrfase_C_sf"/>
</dbReference>
<dbReference type="InterPro" id="IPR002649">
    <property type="entry name" value="tRNA_m1G_MeTrfase_TrmD"/>
</dbReference>
<dbReference type="InterPro" id="IPR029026">
    <property type="entry name" value="tRNA_m1G_MTases_N"/>
</dbReference>
<dbReference type="InterPro" id="IPR016009">
    <property type="entry name" value="tRNA_MeTrfase_TRMD/TRM10"/>
</dbReference>
<dbReference type="NCBIfam" id="NF000648">
    <property type="entry name" value="PRK00026.1"/>
    <property type="match status" value="1"/>
</dbReference>
<dbReference type="NCBIfam" id="TIGR00088">
    <property type="entry name" value="trmD"/>
    <property type="match status" value="1"/>
</dbReference>
<dbReference type="PANTHER" id="PTHR46417">
    <property type="entry name" value="TRNA (GUANINE-N(1)-)-METHYLTRANSFERASE"/>
    <property type="match status" value="1"/>
</dbReference>
<dbReference type="PANTHER" id="PTHR46417:SF1">
    <property type="entry name" value="TRNA (GUANINE-N(1)-)-METHYLTRANSFERASE"/>
    <property type="match status" value="1"/>
</dbReference>
<dbReference type="Pfam" id="PF01746">
    <property type="entry name" value="tRNA_m1G_MT"/>
    <property type="match status" value="1"/>
</dbReference>
<dbReference type="PIRSF" id="PIRSF000386">
    <property type="entry name" value="tRNA_mtase"/>
    <property type="match status" value="1"/>
</dbReference>
<dbReference type="SUPFAM" id="SSF75217">
    <property type="entry name" value="alpha/beta knot"/>
    <property type="match status" value="1"/>
</dbReference>
<gene>
    <name evidence="1" type="primary">trmD</name>
    <name type="ordered locus">BMEA_A1970</name>
</gene>